<reference key="1">
    <citation type="submission" date="2004-11" db="EMBL/GenBank/DDBJ databases">
        <authorList>
            <consortium name="The German cDNA consortium"/>
        </authorList>
    </citation>
    <scope>NUCLEOTIDE SEQUENCE [LARGE SCALE MRNA]</scope>
    <source>
        <tissue>Brain cortex</tissue>
    </source>
</reference>
<keyword id="KW-0007">Acetylation</keyword>
<keyword id="KW-0013">ADP-ribosylation</keyword>
<keyword id="KW-0158">Chromosome</keyword>
<keyword id="KW-0164">Citrullination</keyword>
<keyword id="KW-0238">DNA-binding</keyword>
<keyword id="KW-0379">Hydroxylation</keyword>
<keyword id="KW-0449">Lipoprotein</keyword>
<keyword id="KW-0488">Methylation</keyword>
<keyword id="KW-0544">Nucleosome core</keyword>
<keyword id="KW-0539">Nucleus</keyword>
<keyword id="KW-0597">Phosphoprotein</keyword>
<keyword id="KW-1185">Reference proteome</keyword>
<keyword id="KW-0832">Ubl conjugation</keyword>
<dbReference type="EMBL" id="CR858345">
    <property type="protein sequence ID" value="CAH90578.1"/>
    <property type="molecule type" value="mRNA"/>
</dbReference>
<dbReference type="RefSeq" id="NP_001127304.1">
    <property type="nucleotide sequence ID" value="NM_001133832.1"/>
</dbReference>
<dbReference type="SMR" id="Q5RCC9"/>
<dbReference type="STRING" id="9601.ENSPPYP00000000166"/>
<dbReference type="GeneID" id="100174365"/>
<dbReference type="KEGG" id="pon:100174365"/>
<dbReference type="CTD" id="15081"/>
<dbReference type="eggNOG" id="KOG1745">
    <property type="taxonomic scope" value="Eukaryota"/>
</dbReference>
<dbReference type="InParanoid" id="Q5RCC9"/>
<dbReference type="OrthoDB" id="6256050at2759"/>
<dbReference type="Proteomes" id="UP000001595">
    <property type="component" value="Unplaced"/>
</dbReference>
<dbReference type="GO" id="GO:0000786">
    <property type="term" value="C:nucleosome"/>
    <property type="evidence" value="ECO:0007669"/>
    <property type="project" value="UniProtKB-KW"/>
</dbReference>
<dbReference type="GO" id="GO:0005634">
    <property type="term" value="C:nucleus"/>
    <property type="evidence" value="ECO:0007669"/>
    <property type="project" value="UniProtKB-SubCell"/>
</dbReference>
<dbReference type="GO" id="GO:0003677">
    <property type="term" value="F:DNA binding"/>
    <property type="evidence" value="ECO:0007669"/>
    <property type="project" value="UniProtKB-KW"/>
</dbReference>
<dbReference type="GO" id="GO:0046982">
    <property type="term" value="F:protein heterodimerization activity"/>
    <property type="evidence" value="ECO:0007669"/>
    <property type="project" value="InterPro"/>
</dbReference>
<dbReference type="GO" id="GO:0030527">
    <property type="term" value="F:structural constituent of chromatin"/>
    <property type="evidence" value="ECO:0007669"/>
    <property type="project" value="InterPro"/>
</dbReference>
<dbReference type="CDD" id="cd22911">
    <property type="entry name" value="HFD_H3"/>
    <property type="match status" value="1"/>
</dbReference>
<dbReference type="FunFam" id="1.10.20.10:FF:000078">
    <property type="entry name" value="Histone H3"/>
    <property type="match status" value="1"/>
</dbReference>
<dbReference type="FunFam" id="1.10.20.10:FF:000044">
    <property type="entry name" value="Histone H3.3"/>
    <property type="match status" value="1"/>
</dbReference>
<dbReference type="Gene3D" id="1.10.20.10">
    <property type="entry name" value="Histone, subunit A"/>
    <property type="match status" value="1"/>
</dbReference>
<dbReference type="InterPro" id="IPR009072">
    <property type="entry name" value="Histone-fold"/>
</dbReference>
<dbReference type="InterPro" id="IPR007125">
    <property type="entry name" value="Histone_H2A/H2B/H3"/>
</dbReference>
<dbReference type="InterPro" id="IPR000164">
    <property type="entry name" value="Histone_H3/CENP-A"/>
</dbReference>
<dbReference type="PANTHER" id="PTHR11426">
    <property type="entry name" value="HISTONE H3"/>
    <property type="match status" value="1"/>
</dbReference>
<dbReference type="Pfam" id="PF00125">
    <property type="entry name" value="Histone"/>
    <property type="match status" value="1"/>
</dbReference>
<dbReference type="PRINTS" id="PR00622">
    <property type="entry name" value="HISTONEH3"/>
</dbReference>
<dbReference type="SMART" id="SM00428">
    <property type="entry name" value="H3"/>
    <property type="match status" value="1"/>
</dbReference>
<dbReference type="SUPFAM" id="SSF47113">
    <property type="entry name" value="Histone-fold"/>
    <property type="match status" value="1"/>
</dbReference>
<dbReference type="PROSITE" id="PS00322">
    <property type="entry name" value="HISTONE_H3_1"/>
    <property type="match status" value="1"/>
</dbReference>
<dbReference type="PROSITE" id="PS00959">
    <property type="entry name" value="HISTONE_H3_2"/>
    <property type="match status" value="1"/>
</dbReference>
<organism>
    <name type="scientific">Pongo abelii</name>
    <name type="common">Sumatran orangutan</name>
    <name type="synonym">Pongo pygmaeus abelii</name>
    <dbReference type="NCBI Taxonomy" id="9601"/>
    <lineage>
        <taxon>Eukaryota</taxon>
        <taxon>Metazoa</taxon>
        <taxon>Chordata</taxon>
        <taxon>Craniata</taxon>
        <taxon>Vertebrata</taxon>
        <taxon>Euteleostomi</taxon>
        <taxon>Mammalia</taxon>
        <taxon>Eutheria</taxon>
        <taxon>Euarchontoglires</taxon>
        <taxon>Primates</taxon>
        <taxon>Haplorrhini</taxon>
        <taxon>Catarrhini</taxon>
        <taxon>Hominidae</taxon>
        <taxon>Pongo</taxon>
    </lineage>
</organism>
<name>H33_PONAB</name>
<comment type="function">
    <text evidence="4">Variant histone H3 which replaces conventional H3 in a wide range of nucleosomes in active genes. Constitutes the predominant form of histone H3 in non-dividing cells and is incorporated into chromatin independently of DNA synthesis. Deposited at sites of nucleosomal displacement throughout transcribed genes, suggesting that it represents an epigenetic imprint of transcriptionally active chromatin. Nucleosomes wrap and compact DNA into chromatin, limiting DNA accessibility to the cellular machineries which require DNA as a template. Histones thereby play a central role in transcription regulation, DNA repair, DNA replication and chromosomal stability. DNA accessibility is regulated via a complex set of post-translational modifications of histones, also called histone code, and nucleosome remodeling.</text>
</comment>
<comment type="subunit">
    <text evidence="4">The nucleosome is a histone octamer containing two molecules each of H2A, H2B, H3 and H4 assembled in one H3-H4 heterotetramer and two H2A-H2B heterodimers. The octamer wraps approximately 147 bp of DNA. Interacts with HIRA, a chaperone required for its incorporation into nucleosomes. Interacts with ZMYND11; when trimethylated at 'Lys-36' (H3.3K36me3). Found in a co-chaperone complex with DNJC9, MCM2 and histone H3.3-H4 dimers (By similarity). Within the complex, interacts with DNJC9 (via C-terminus); the interaction is direct (By similarity). Interacts with ASF1A, MCM2, NASP and SPT2 (By similarity). Interacts with DAXX; the interaction is direct (By similarity). Interacts with NASP; NASP is a histone chaperone that stabilizes and maintains a soluble pool of Histone H3-H4 dimers (By similarity).</text>
</comment>
<comment type="subcellular location">
    <subcellularLocation>
        <location evidence="1">Nucleus</location>
    </subcellularLocation>
    <subcellularLocation>
        <location evidence="1">Chromosome</location>
    </subcellularLocation>
</comment>
<comment type="developmental stage">
    <text>Expressed throughout the cell cycle independently of DNA synthesis.</text>
</comment>
<comment type="domain">
    <text evidence="4">Specific interaction of trimethylated form at 'Lys-36' (H3.3K36me3) with ZMYND11 is mediated by the encapsulation of Ser-32 residue with a composite pocket formed by the tandem bromo-PWWP domains (By similarity). Interacts with ZMYND11; when trimethylated at 'Lys-36' (H3.3K36me3).</text>
</comment>
<comment type="PTM">
    <text evidence="4">Acetylation is generally linked to gene activation. Acetylation on Lys-10 (H3K9ac) impairs methylation at Arg-9 (H3R8me2s). Acetylation on Lys-19 (H3K18ac) and Lys-24 (H3K24ac) favors methylation at Arg-18 (H3R17me). Acetylation at Lys-123 (H3K122ac) by EP300/p300 plays a central role in chromatin structure: localizes at the surface of the histone octamer and stimulates transcription, possibly by promoting nucleosome instability.</text>
</comment>
<comment type="PTM">
    <text evidence="4">Citrullination at Arg-9 (H3R8ci) and/or Arg-18 (H3R17ci) by PADI4 impairs methylation and represses transcription.</text>
</comment>
<comment type="PTM">
    <text evidence="4">Asymmetric dimethylation at Arg-18 (H3R17me2a) by CARM1 is linked to gene activation. Symmetric dimethylation at Arg-9 (H3R8me2s) by PRMT5 is linked to gene repression. Asymmetric dimethylation at Arg-3 (H3R2me2a) by PRMT6 is linked to gene repression and is mutually exclusive with H3 Lys-5 methylation (H3K4me2 and H3K4me3). H3R2me2a is present at the 3' of genes regardless of their transcription state and is enriched on inactive promoters, while it is absent on active promoters.</text>
</comment>
<comment type="PTM">
    <text evidence="4">Specifically enriched in modifications associated with active chromatin such as methylation at Lys-5 (H3K4me), Lys-37 and Lys-80. Methylation at Lys-5 (H3K4me) facilitates subsequent acetylation of H3 and H4. Methylation at Lys-80 (H3K79me) is associated with DNA double-strand break (DSB) responses and is a specific target for TP53BP1. Methylation at Lys-10 (H3K9me) and Lys-28 (H3K27me), which are linked to gene repression, are underrepresented. Methylation at Lys-10 (H3K9me) is a specific target for HP1 proteins (CBX1, CBX3 and CBX5) and prevents subsequent phosphorylation at Ser-11 (H3S10ph) and acetylation of H3 and H4. Methylation at Lys-5 (H3K4me) and Lys-80 (H3K79me) require preliminary monoubiquitination of H2B at 'Lys-120'. Methylation at Lys-10 (H3K9me) and Lys-28 (H3K27me) are enriched in inactive X chromosome chromatin. Monomethylation at Lys-57 (H3K56me1) by EHMT2/G9A in G1 phase promotes interaction with PCNA and is required for DNA replication.</text>
</comment>
<comment type="PTM">
    <text evidence="4">Phosphorylated at Thr-4 (H3T3ph) by VRK1 (By similarity). Phosphorylated at Thr-4 (H3T3ph) by HASPIN during prophase and dephosphorylated during anaphase. Phosphorylation at Ser-11 (H3S10ph) by AURKB is crucial for chromosome condensation and cell-cycle progression during mitosis and meiosis. In addition phosphorylation at Ser-11 (H3S10ph) by RPS6KA4 and RPS6KA5 is important during interphase because it enables the transcription of genes following external stimulation, like mitogens, stress, growth factors or UV irradiation and result in the activation of genes, such as c-fos and c-jun. Phosphorylation at Ser-11 (H3S10ph), which is linked to gene activation, prevents methylation at Lys-10 (H3K9me) but facilitates acetylation of H3 and H4. Phosphorylation at Ser-11 (H3S10ph) by AURKB mediates the dissociation of HP1 proteins (CBX1, CBX3 and CBX5) from heterochromatin. Phosphorylation at Ser-11 (H3S10ph) is also an essential regulatory mechanism for neoplastic cell transformation. Phosphorylated at Ser-29 (H3S28ph) by MAP3K20 isoform 1, RPS6KA5 or AURKB during mitosis or upon ultraviolet B irradiation. Phosphorylation at Thr-7 (H3T6ph) by PRKCB is a specific tag for epigenetic transcriptional activation that prevents demethylation of Lys-5 (H3K4me) by LSD1/KDM1A. At centromeres, specifically phosphorylated at Thr-12 (H3T11ph) from prophase to early anaphase, by DAPK3 and PKN1. Phosphorylation at Thr-12 (H3T11ph) by PKN1 or isoform M2 of PKM (PKM2) is a specific tag for epigenetic transcriptional activation that promotes demethylation of Lys-10 (H3K9me) by KDM4C/JMJD2C. Phosphorylation at Tyr-42 (H3Y41ph) by JAK2 promotes exclusion of CBX5 (HP1 alpha) from chromatin. Phosphorylation on Ser-32 (H3S31ph) is specific to regions bordering centromeres in metaphase chromosomes.</text>
</comment>
<comment type="PTM">
    <text evidence="6">Ubiquitinated. Monoubiquitinated by RAG1 in lymphoid cells, monoubiquitination is required for V(D)J recombination (By similarity).</text>
</comment>
<comment type="PTM">
    <text evidence="4">Lysine deamination at Lys-5 (H3K4all) to form allysine is mediated by LOXL2. Allysine formation by LOXL2 only takes place on H3K4me3 and results in gene repression.</text>
</comment>
<comment type="PTM">
    <text evidence="4">Crotonylation (Kcr) is specifically present in male germ cells and marks testis-specific genes in post-meiotic cells, including X-linked genes that escape sex chromosome inactivation in haploid cells. Crotonylation marks active promoters and enhancers and confers resistance to transcriptional repressors. It is also associated with post-meiotically activated genes on autosomes.</text>
</comment>
<comment type="PTM">
    <text evidence="3">Butyrylation of histones marks active promoters and competes with histone acetylation. It is present during late spermatogenesis.</text>
</comment>
<comment type="PTM">
    <text evidence="4">Succinylation at Lys-80 (H3K79succ) by KAT2A takes place with a maximum frequency around the transcription start sites of genes. It gives a specific tag for epigenetic transcription activation. Desuccinylation at Lys-123 (H3K122succ) by SIRT7 in response to DNA damage promotes chromatin condensation and double-strand breaks (DSBs) repair.</text>
</comment>
<comment type="PTM">
    <text evidence="2">Serine ADP-ribosylation by PARP1 or PARP2 constitutes the primary form of ADP-ribosylation of proteins in response to DNA damage. Serine ADP-ribosylation at Ser-11 (H3S10ADPr) promotes recruitment of CHD1L. H3S10ADPr is mutually exclusive with phosphorylation at Ser-11 (H3S10ph) and impairs acetylation at Lys-10 (H3K9ac).</text>
</comment>
<comment type="PTM">
    <text evidence="4">Serotonylated by TGM2 at Gln-6 (H3Q5ser) during serotonergic neuron differentiation (By similarity). H3Q5ser is associated with trimethylation of Lys-5 (H3K4me3) and enhances general transcription factor IID (TFIID) complex-binding to H3K4me3, thereby facilitating transcription (By similarity).</text>
</comment>
<comment type="PTM">
    <text evidence="4 6">Dopaminylated by TGM2 at Gln-6 (H3Q5dop) in ventral tegmental area (VTA) neurons (By similarity). H3Q5dop mediates neurotransmission-independent role of nuclear dopamine by regulating relapse-related transcriptional plasticity in the reward system (By similarity).</text>
</comment>
<comment type="PTM">
    <text evidence="4">Lactylated in macrophages by EP300/P300 by using lactoyl-CoA directly derived from endogenous or exogenous lactate, leading to stimulates gene transcription.</text>
</comment>
<comment type="similarity">
    <text evidence="10">Belongs to the histone H3 family.</text>
</comment>
<sequence>MARTKQTARKSTGGKAPRKQLATKAARKSAPSTGGVKKPHRYRPGTVALREIRRYQKSTELLIRKLPFQRLAREIAQDFKTDLRFQSAAIGALQEASEAYLVGLFEDTNLCAIHAKRVTIMPKDIQLARRIRGERA</sequence>
<evidence type="ECO:0000250" key="1"/>
<evidence type="ECO:0000250" key="2">
    <source>
        <dbReference type="UniProtKB" id="P68431"/>
    </source>
</evidence>
<evidence type="ECO:0000250" key="3">
    <source>
        <dbReference type="UniProtKB" id="P68433"/>
    </source>
</evidence>
<evidence type="ECO:0000250" key="4">
    <source>
        <dbReference type="UniProtKB" id="P84243"/>
    </source>
</evidence>
<evidence type="ECO:0000250" key="5">
    <source>
        <dbReference type="UniProtKB" id="P84244"/>
    </source>
</evidence>
<evidence type="ECO:0000250" key="6">
    <source>
        <dbReference type="UniProtKB" id="P84245"/>
    </source>
</evidence>
<evidence type="ECO:0000250" key="7">
    <source>
        <dbReference type="UniProtKB" id="Q5E9F8"/>
    </source>
</evidence>
<evidence type="ECO:0000250" key="8">
    <source>
        <dbReference type="UniProtKB" id="Q71DI3"/>
    </source>
</evidence>
<evidence type="ECO:0000256" key="9">
    <source>
        <dbReference type="SAM" id="MobiDB-lite"/>
    </source>
</evidence>
<evidence type="ECO:0000305" key="10"/>
<proteinExistence type="evidence at transcript level"/>
<accession>Q5RCC9</accession>
<feature type="initiator methionine" description="Removed" evidence="10">
    <location>
        <position position="1"/>
    </location>
</feature>
<feature type="chain" id="PRO_0000253955" description="Histone H3.3">
    <location>
        <begin position="2"/>
        <end position="136"/>
    </location>
</feature>
<feature type="region of interest" description="Disordered" evidence="9">
    <location>
        <begin position="1"/>
        <end position="43"/>
    </location>
</feature>
<feature type="site" description="Interaction with ZMYND11" evidence="4">
    <location>
        <position position="32"/>
    </location>
</feature>
<feature type="modified residue" description="Asymmetric dimethylarginine; by PRMT6; alternate" evidence="4">
    <location>
        <position position="3"/>
    </location>
</feature>
<feature type="modified residue" description="Citrulline; alternate" evidence="4">
    <location>
        <position position="3"/>
    </location>
</feature>
<feature type="modified residue" description="Phosphothreonine; by HASPIN and VRK1" evidence="4">
    <location>
        <position position="4"/>
    </location>
</feature>
<feature type="modified residue" description="Allysine; alternate" evidence="4">
    <location>
        <position position="5"/>
    </location>
</feature>
<feature type="modified residue" description="N6,N6,N6-trimethyllysine; alternate" evidence="4">
    <location>
        <position position="5"/>
    </location>
</feature>
<feature type="modified residue" description="N6,N6-dimethyllysine; alternate" evidence="4">
    <location>
        <position position="5"/>
    </location>
</feature>
<feature type="modified residue" description="N6-(2-hydroxyisobutyryl)lysine; alternate" evidence="2">
    <location>
        <position position="5"/>
    </location>
</feature>
<feature type="modified residue" description="N6-(beta-hydroxybutyryl)lysine; alternate" evidence="3">
    <location>
        <position position="5"/>
    </location>
</feature>
<feature type="modified residue" description="N6-acetyllysine; alternate" evidence="4">
    <location>
        <position position="5"/>
    </location>
</feature>
<feature type="modified residue" description="N6-crotonyllysine; alternate" evidence="4">
    <location>
        <position position="5"/>
    </location>
</feature>
<feature type="modified residue" description="N6-methyllysine; alternate" evidence="4">
    <location>
        <position position="5"/>
    </location>
</feature>
<feature type="modified residue" description="5-glutamyl dopamine; alternate" evidence="4">
    <location>
        <position position="6"/>
    </location>
</feature>
<feature type="modified residue" description="5-glutamyl serotonin; alternate" evidence="4">
    <location>
        <position position="6"/>
    </location>
</feature>
<feature type="modified residue" description="Phosphothreonine; by PKC" evidence="4">
    <location>
        <position position="7"/>
    </location>
</feature>
<feature type="modified residue" description="Citrulline; alternate" evidence="4">
    <location>
        <position position="9"/>
    </location>
</feature>
<feature type="modified residue" description="Symmetric dimethylarginine; by PRMT5; alternate" evidence="5">
    <location>
        <position position="9"/>
    </location>
</feature>
<feature type="modified residue" description="N6,N6,N6-trimethyllysine; alternate" evidence="4">
    <location>
        <position position="10"/>
    </location>
</feature>
<feature type="modified residue" description="N6,N6-dimethyllysine; alternate" evidence="4">
    <location>
        <position position="10"/>
    </location>
</feature>
<feature type="modified residue" description="N6-(2-hydroxyisobutyryl)lysine; alternate" evidence="2">
    <location>
        <position position="10"/>
    </location>
</feature>
<feature type="modified residue" description="N6-(beta-hydroxybutyryl)lysine; alternate" evidence="3">
    <location>
        <position position="10"/>
    </location>
</feature>
<feature type="modified residue" description="N6-acetyllysine; alternate" evidence="4">
    <location>
        <position position="10"/>
    </location>
</feature>
<feature type="modified residue" description="N6-crotonyllysine; alternate" evidence="4">
    <location>
        <position position="10"/>
    </location>
</feature>
<feature type="modified residue" description="N6-lactoyllysine; alternate" evidence="4">
    <location>
        <position position="10"/>
    </location>
</feature>
<feature type="modified residue" description="N6-methyllysine; alternate" evidence="4">
    <location>
        <position position="10"/>
    </location>
</feature>
<feature type="modified residue" description="ADP-ribosylserine; alternate" evidence="2">
    <location>
        <position position="11"/>
    </location>
</feature>
<feature type="modified residue" description="Phosphoserine; alternate; by AURKB, AURKC, RPS6KA3, RPS6KA4 and RPS6KA5" evidence="7">
    <location>
        <position position="11"/>
    </location>
</feature>
<feature type="modified residue" description="Phosphothreonine; by PKC" evidence="2">
    <location>
        <position position="12"/>
    </location>
</feature>
<feature type="modified residue" description="N6-(2-hydroxyisobutyryl)lysine; alternate" evidence="2">
    <location>
        <position position="15"/>
    </location>
</feature>
<feature type="modified residue" description="N6-(beta-hydroxybutyryl)lysine; alternate" evidence="3">
    <location>
        <position position="15"/>
    </location>
</feature>
<feature type="modified residue" description="N6-acetyllysine; alternate" evidence="4">
    <location>
        <position position="15"/>
    </location>
</feature>
<feature type="modified residue" description="N6-glutaryllysine; alternate" evidence="4">
    <location>
        <position position="15"/>
    </location>
</feature>
<feature type="modified residue" description="N6-lactoyllysine; alternate" evidence="5">
    <location>
        <position position="15"/>
    </location>
</feature>
<feature type="modified residue" description="N6-succinyllysine; alternate" evidence="4">
    <location>
        <position position="15"/>
    </location>
</feature>
<feature type="modified residue" description="Asymmetric dimethylarginine; by CARM1; alternate" evidence="4">
    <location>
        <position position="18"/>
    </location>
</feature>
<feature type="modified residue" description="Citrulline; alternate" evidence="4">
    <location>
        <position position="18"/>
    </location>
</feature>
<feature type="modified residue" description="N6-(2-hydroxyisobutyryl)lysine; alternate" evidence="2">
    <location>
        <position position="19"/>
    </location>
</feature>
<feature type="modified residue" description="N6-(beta-hydroxybutyryl)lysine; alternate" evidence="3">
    <location>
        <position position="19"/>
    </location>
</feature>
<feature type="modified residue" description="N6-acetyllysine; alternate" evidence="4">
    <location>
        <position position="19"/>
    </location>
</feature>
<feature type="modified residue" description="N6-butyryllysine; alternate" evidence="3">
    <location>
        <position position="19"/>
    </location>
</feature>
<feature type="modified residue" description="N6-crotonyllysine; alternate" evidence="4">
    <location>
        <position position="19"/>
    </location>
</feature>
<feature type="modified residue" description="N6-glutaryllysine; alternate" evidence="4">
    <location>
        <position position="19"/>
    </location>
</feature>
<feature type="modified residue" description="N6-lactoyllysine; alternate" evidence="4">
    <location>
        <position position="19"/>
    </location>
</feature>
<feature type="modified residue" description="N6-methyllysine; alternate" evidence="4">
    <location>
        <position position="19"/>
    </location>
</feature>
<feature type="modified residue" description="N6-(2-hydroxyisobutyryl)lysine; alternate" evidence="2">
    <location>
        <position position="24"/>
    </location>
</feature>
<feature type="modified residue" description="N6-(beta-hydroxybutyryl)lysine; alternate" evidence="3">
    <location>
        <position position="24"/>
    </location>
</feature>
<feature type="modified residue" description="N6-acetyllysine; alternate" evidence="4">
    <location>
        <position position="24"/>
    </location>
</feature>
<feature type="modified residue" description="N6-butyryllysine; alternate" evidence="3">
    <location>
        <position position="24"/>
    </location>
</feature>
<feature type="modified residue" description="N6-crotonyllysine; alternate" evidence="4">
    <location>
        <position position="24"/>
    </location>
</feature>
<feature type="modified residue" description="N6-glutaryllysine; alternate" evidence="4">
    <location>
        <position position="24"/>
    </location>
</feature>
<feature type="modified residue" description="N6-lactoyllysine; alternate" evidence="4">
    <location>
        <position position="24"/>
    </location>
</feature>
<feature type="modified residue" description="N6-methyllysine; alternate" evidence="4">
    <location>
        <position position="24"/>
    </location>
</feature>
<feature type="modified residue" description="Citrulline" evidence="4">
    <location>
        <position position="27"/>
    </location>
</feature>
<feature type="modified residue" description="N6,N6,N6-trimethyllysine; alternate" evidence="4">
    <location>
        <position position="28"/>
    </location>
</feature>
<feature type="modified residue" description="N6,N6-dimethyllysine; alternate" evidence="4">
    <location>
        <position position="28"/>
    </location>
</feature>
<feature type="modified residue" description="N6-(2-hydroxyisobutyryl)lysine; alternate" evidence="2">
    <location>
        <position position="28"/>
    </location>
</feature>
<feature type="modified residue" description="N6-acetyllysine; alternate" evidence="4">
    <location>
        <position position="28"/>
    </location>
</feature>
<feature type="modified residue" description="N6-crotonyllysine; alternate" evidence="4">
    <location>
        <position position="28"/>
    </location>
</feature>
<feature type="modified residue" description="N6-glutaryllysine; alternate" evidence="4">
    <location>
        <position position="28"/>
    </location>
</feature>
<feature type="modified residue" description="N6-lactoyllysine; alternate" evidence="4">
    <location>
        <position position="28"/>
    </location>
</feature>
<feature type="modified residue" description="N6-methyllysine; alternate" evidence="4">
    <location>
        <position position="28"/>
    </location>
</feature>
<feature type="modified residue" description="ADP-ribosylserine; alternate" evidence="2">
    <location>
        <position position="29"/>
    </location>
</feature>
<feature type="modified residue" description="Phosphoserine; alternate; by AURKB, AURKC and RPS6KA5" evidence="7">
    <location>
        <position position="29"/>
    </location>
</feature>
<feature type="modified residue" description="Phosphoserine" evidence="4">
    <location>
        <position position="32"/>
    </location>
</feature>
<feature type="modified residue" description="N6,N6,N6-trimethyllysine; alternate" evidence="4">
    <location>
        <position position="37"/>
    </location>
</feature>
<feature type="modified residue" description="N6,N6-dimethyllysine; alternate" evidence="4">
    <location>
        <position position="37"/>
    </location>
</feature>
<feature type="modified residue" description="N6-(2-hydroxyisobutyryl)lysine; alternate" evidence="2">
    <location>
        <position position="37"/>
    </location>
</feature>
<feature type="modified residue" description="N6-acetyllysine; alternate" evidence="4">
    <location>
        <position position="37"/>
    </location>
</feature>
<feature type="modified residue" description="N6-methyllysine; alternate" evidence="4">
    <location>
        <position position="37"/>
    </location>
</feature>
<feature type="modified residue" description="N6-methyllysine" evidence="2">
    <location>
        <position position="38"/>
    </location>
</feature>
<feature type="modified residue" description="Phosphotyrosine" evidence="4">
    <location>
        <position position="42"/>
    </location>
</feature>
<feature type="modified residue" description="N6,N6,N6-trimethyllysine; alternate" evidence="4">
    <location>
        <position position="57"/>
    </location>
</feature>
<feature type="modified residue" description="N6-(2-hydroxyisobutyryl)lysine; alternate" evidence="2">
    <location>
        <position position="57"/>
    </location>
</feature>
<feature type="modified residue" description="N6-(beta-hydroxybutyryl)lysine; alternate" evidence="3">
    <location>
        <position position="57"/>
    </location>
</feature>
<feature type="modified residue" description="N6-acetyllysine; alternate" evidence="4">
    <location>
        <position position="57"/>
    </location>
</feature>
<feature type="modified residue" description="N6-crotonyllysine; alternate" evidence="4">
    <location>
        <position position="57"/>
    </location>
</feature>
<feature type="modified residue" description="N6-glutaryllysine; alternate" evidence="4">
    <location>
        <position position="57"/>
    </location>
</feature>
<feature type="modified residue" description="N6-lactoyllysine; alternate" evidence="5">
    <location>
        <position position="57"/>
    </location>
</feature>
<feature type="modified residue" description="N6-methyllysine; by EHMT2; alternate" evidence="4">
    <location>
        <position position="57"/>
    </location>
</feature>
<feature type="modified residue" description="N6-succinyllysine; alternate" evidence="4">
    <location>
        <position position="57"/>
    </location>
</feature>
<feature type="modified residue" description="Phosphoserine" evidence="4">
    <location>
        <position position="58"/>
    </location>
</feature>
<feature type="modified residue" description="N6-(2-hydroxyisobutyryl)lysine; alternate" evidence="2">
    <location>
        <position position="65"/>
    </location>
</feature>
<feature type="modified residue" description="N6-methyllysine; alternate" evidence="4">
    <location>
        <position position="65"/>
    </location>
</feature>
<feature type="modified residue" description="N6,N6,N6-trimethyllysine; alternate" evidence="5">
    <location>
        <position position="80"/>
    </location>
</feature>
<feature type="modified residue" description="N6,N6-dimethyllysine; alternate" evidence="4">
    <location>
        <position position="80"/>
    </location>
</feature>
<feature type="modified residue" description="N6-(2-hydroxyisobutyryl)lysine; alternate" evidence="2">
    <location>
        <position position="80"/>
    </location>
</feature>
<feature type="modified residue" description="N6-acetyllysine; alternate" evidence="4">
    <location>
        <position position="80"/>
    </location>
</feature>
<feature type="modified residue" description="N6-glutaryllysine; alternate" evidence="4">
    <location>
        <position position="80"/>
    </location>
</feature>
<feature type="modified residue" description="N6-lactoyllysine; alternate" evidence="4">
    <location>
        <position position="80"/>
    </location>
</feature>
<feature type="modified residue" description="N6-methyllysine; alternate" evidence="4">
    <location>
        <position position="80"/>
    </location>
</feature>
<feature type="modified residue" description="N6-succinyllysine; alternate" evidence="4">
    <location>
        <position position="80"/>
    </location>
</feature>
<feature type="modified residue" description="Phosphothreonine" evidence="4">
    <location>
        <position position="81"/>
    </location>
</feature>
<feature type="modified residue" description="Phosphoserine" evidence="4">
    <location>
        <position position="87"/>
    </location>
</feature>
<feature type="modified residue" description="Phosphothreonine" evidence="8">
    <location>
        <position position="108"/>
    </location>
</feature>
<feature type="modified residue" description="N6-acetyllysine; alternate" evidence="4">
    <location>
        <position position="116"/>
    </location>
</feature>
<feature type="modified residue" description="N6-glutaryllysine; alternate" evidence="4">
    <location>
        <position position="116"/>
    </location>
</feature>
<feature type="modified residue" description="N6-(2-hydroxyisobutyryl)lysine; alternate" evidence="2">
    <location>
        <position position="123"/>
    </location>
</feature>
<feature type="modified residue" description="N6-acetyllysine; alternate" evidence="4">
    <location>
        <position position="123"/>
    </location>
</feature>
<feature type="modified residue" description="N6-glutaryllysine; alternate" evidence="4">
    <location>
        <position position="123"/>
    </location>
</feature>
<feature type="modified residue" description="N6-methyllysine; alternate" evidence="4">
    <location>
        <position position="123"/>
    </location>
</feature>
<feature type="modified residue" description="N6-succinyllysine; alternate" evidence="4">
    <location>
        <position position="123"/>
    </location>
</feature>
<feature type="lipid moiety-binding region" description="N6-decanoyllysine" evidence="4">
    <location>
        <position position="19"/>
    </location>
</feature>
<protein>
    <recommendedName>
        <fullName>Histone H3.3</fullName>
    </recommendedName>
</protein>